<organism>
    <name type="scientific">Escherichia coli O139:H28 (strain E24377A / ETEC)</name>
    <dbReference type="NCBI Taxonomy" id="331111"/>
    <lineage>
        <taxon>Bacteria</taxon>
        <taxon>Pseudomonadati</taxon>
        <taxon>Pseudomonadota</taxon>
        <taxon>Gammaproteobacteria</taxon>
        <taxon>Enterobacterales</taxon>
        <taxon>Enterobacteriaceae</taxon>
        <taxon>Escherichia</taxon>
    </lineage>
</organism>
<protein>
    <recommendedName>
        <fullName evidence="1">5-keto-4-deoxy-D-glucarate aldolase</fullName>
        <shortName evidence="1">KDGluc aldolase</shortName>
        <shortName evidence="1">KDGlucA</shortName>
        <ecNumber evidence="1">4.1.2.20</ecNumber>
    </recommendedName>
    <alternativeName>
        <fullName evidence="1">2-dehydro-3-deoxy-D-glucarate aldolase</fullName>
    </alternativeName>
    <alternativeName>
        <fullName evidence="1">2-keto-3-deoxy-D-glucarate aldolase</fullName>
    </alternativeName>
    <alternativeName>
        <fullName evidence="1">5-dehydro-4-deoxy-D-glucarate aldolase</fullName>
    </alternativeName>
    <alternativeName>
        <fullName evidence="1">Alpha-keto-beta-deoxy-D-glucarate aldolase</fullName>
    </alternativeName>
</protein>
<dbReference type="EC" id="4.1.2.20" evidence="1"/>
<dbReference type="EMBL" id="CP000800">
    <property type="protein sequence ID" value="ABV17906.1"/>
    <property type="molecule type" value="Genomic_DNA"/>
</dbReference>
<dbReference type="RefSeq" id="WP_001058227.1">
    <property type="nucleotide sequence ID" value="NC_009801.1"/>
</dbReference>
<dbReference type="SMR" id="A7ZS18"/>
<dbReference type="GeneID" id="93778860"/>
<dbReference type="KEGG" id="ecw:EcE24377A_3604"/>
<dbReference type="HOGENOM" id="CLU_059964_1_0_6"/>
<dbReference type="UniPathway" id="UPA00565">
    <property type="reaction ID" value="UER00630"/>
</dbReference>
<dbReference type="Proteomes" id="UP000001122">
    <property type="component" value="Chromosome"/>
</dbReference>
<dbReference type="GO" id="GO:0005737">
    <property type="term" value="C:cytoplasm"/>
    <property type="evidence" value="ECO:0007669"/>
    <property type="project" value="TreeGrafter"/>
</dbReference>
<dbReference type="GO" id="GO:0008672">
    <property type="term" value="F:2-dehydro-3-deoxyglucarate aldolase activity"/>
    <property type="evidence" value="ECO:0007669"/>
    <property type="project" value="UniProtKB-UniRule"/>
</dbReference>
<dbReference type="GO" id="GO:0000287">
    <property type="term" value="F:magnesium ion binding"/>
    <property type="evidence" value="ECO:0007669"/>
    <property type="project" value="UniProtKB-UniRule"/>
</dbReference>
<dbReference type="GO" id="GO:0042838">
    <property type="term" value="P:D-glucarate catabolic process"/>
    <property type="evidence" value="ECO:0007669"/>
    <property type="project" value="UniProtKB-UniRule"/>
</dbReference>
<dbReference type="GO" id="GO:0046392">
    <property type="term" value="P:galactarate catabolic process"/>
    <property type="evidence" value="ECO:0007669"/>
    <property type="project" value="UniProtKB-UniRule"/>
</dbReference>
<dbReference type="FunFam" id="3.20.20.60:FF:000004">
    <property type="entry name" value="5-keto-4-deoxy-D-glucarate aldolase"/>
    <property type="match status" value="1"/>
</dbReference>
<dbReference type="Gene3D" id="3.20.20.60">
    <property type="entry name" value="Phosphoenolpyruvate-binding domains"/>
    <property type="match status" value="1"/>
</dbReference>
<dbReference type="HAMAP" id="MF_01291">
    <property type="entry name" value="KDGluc_aldolase"/>
    <property type="match status" value="1"/>
</dbReference>
<dbReference type="InterPro" id="IPR005000">
    <property type="entry name" value="Aldolase/citrate-lyase_domain"/>
</dbReference>
<dbReference type="InterPro" id="IPR017648">
    <property type="entry name" value="GarL"/>
</dbReference>
<dbReference type="InterPro" id="IPR050251">
    <property type="entry name" value="HpcH-HpaI_aldolase"/>
</dbReference>
<dbReference type="InterPro" id="IPR015813">
    <property type="entry name" value="Pyrv/PenolPyrv_kinase-like_dom"/>
</dbReference>
<dbReference type="InterPro" id="IPR040442">
    <property type="entry name" value="Pyrv_kinase-like_dom_sf"/>
</dbReference>
<dbReference type="NCBIfam" id="TIGR03239">
    <property type="entry name" value="GarL"/>
    <property type="match status" value="1"/>
</dbReference>
<dbReference type="NCBIfam" id="NF007849">
    <property type="entry name" value="PRK10558.1"/>
    <property type="match status" value="1"/>
</dbReference>
<dbReference type="PANTHER" id="PTHR30502">
    <property type="entry name" value="2-KETO-3-DEOXY-L-RHAMNONATE ALDOLASE"/>
    <property type="match status" value="1"/>
</dbReference>
<dbReference type="PANTHER" id="PTHR30502:SF4">
    <property type="entry name" value="5-KETO-4-DEOXY-D-GLUCARATE ALDOLASE"/>
    <property type="match status" value="1"/>
</dbReference>
<dbReference type="Pfam" id="PF03328">
    <property type="entry name" value="HpcH_HpaI"/>
    <property type="match status" value="1"/>
</dbReference>
<dbReference type="SUPFAM" id="SSF51621">
    <property type="entry name" value="Phosphoenolpyruvate/pyruvate domain"/>
    <property type="match status" value="1"/>
</dbReference>
<reference key="1">
    <citation type="journal article" date="2008" name="J. Bacteriol.">
        <title>The pangenome structure of Escherichia coli: comparative genomic analysis of E. coli commensal and pathogenic isolates.</title>
        <authorList>
            <person name="Rasko D.A."/>
            <person name="Rosovitz M.J."/>
            <person name="Myers G.S.A."/>
            <person name="Mongodin E.F."/>
            <person name="Fricke W.F."/>
            <person name="Gajer P."/>
            <person name="Crabtree J."/>
            <person name="Sebaihia M."/>
            <person name="Thomson N.R."/>
            <person name="Chaudhuri R."/>
            <person name="Henderson I.R."/>
            <person name="Sperandio V."/>
            <person name="Ravel J."/>
        </authorList>
    </citation>
    <scope>NUCLEOTIDE SEQUENCE [LARGE SCALE GENOMIC DNA]</scope>
    <source>
        <strain>E24377A / ETEC</strain>
    </source>
</reference>
<accession>A7ZS18</accession>
<evidence type="ECO:0000255" key="1">
    <source>
        <dbReference type="HAMAP-Rule" id="MF_01291"/>
    </source>
</evidence>
<proteinExistence type="inferred from homology"/>
<comment type="function">
    <text evidence="1">Catalyzes the reversible retro-aldol cleavage of both 5-keto-4-deoxy-D-glucarate and 2-keto-3-deoxy-D-glucarate to pyruvate and tartronic semialdehyde.</text>
</comment>
<comment type="catalytic activity">
    <reaction evidence="1">
        <text>5-dehydro-4-deoxy-D-glucarate = 2-hydroxy-3-oxopropanoate + pyruvate</text>
        <dbReference type="Rhea" id="RHEA:27726"/>
        <dbReference type="ChEBI" id="CHEBI:15361"/>
        <dbReference type="ChEBI" id="CHEBI:42819"/>
        <dbReference type="ChEBI" id="CHEBI:57978"/>
    </reaction>
</comment>
<comment type="catalytic activity">
    <reaction evidence="1">
        <text>2-dehydro-3-deoxy-D-glucarate = 2-hydroxy-3-oxopropanoate + pyruvate</text>
        <dbReference type="Rhea" id="RHEA:10268"/>
        <dbReference type="ChEBI" id="CHEBI:15361"/>
        <dbReference type="ChEBI" id="CHEBI:57978"/>
        <dbReference type="ChEBI" id="CHEBI:58098"/>
        <dbReference type="EC" id="4.1.2.20"/>
    </reaction>
</comment>
<comment type="cofactor">
    <cofactor evidence="1">
        <name>Mg(2+)</name>
        <dbReference type="ChEBI" id="CHEBI:18420"/>
    </cofactor>
    <text evidence="1">Binds 1 Mg(2+) ion per subunit.</text>
</comment>
<comment type="pathway">
    <text evidence="1">Carbohydrate acid metabolism; galactarate degradation; D-glycerate from galactarate: step 2/3.</text>
</comment>
<comment type="subunit">
    <text evidence="1">Homohexamer; trimer of dimers.</text>
</comment>
<comment type="similarity">
    <text evidence="1">Belongs to the HpcH/HpaI aldolase family. KDGluc aldolase subfamily.</text>
</comment>
<feature type="chain" id="PRO_0000353146" description="5-keto-4-deoxy-D-glucarate aldolase">
    <location>
        <begin position="1"/>
        <end position="256"/>
    </location>
</feature>
<feature type="active site" description="Proton acceptor" evidence="1">
    <location>
        <position position="50"/>
    </location>
</feature>
<feature type="binding site" evidence="1">
    <location>
        <position position="151"/>
    </location>
    <ligand>
        <name>substrate</name>
    </ligand>
</feature>
<feature type="binding site" evidence="1">
    <location>
        <position position="153"/>
    </location>
    <ligand>
        <name>Mg(2+)</name>
        <dbReference type="ChEBI" id="CHEBI:18420"/>
    </ligand>
</feature>
<feature type="binding site" evidence="1">
    <location>
        <position position="178"/>
    </location>
    <ligand>
        <name>substrate</name>
    </ligand>
</feature>
<feature type="binding site" evidence="1">
    <location>
        <position position="179"/>
    </location>
    <ligand>
        <name>Mg(2+)</name>
        <dbReference type="ChEBI" id="CHEBI:18420"/>
    </ligand>
</feature>
<feature type="binding site" evidence="1">
    <location>
        <position position="179"/>
    </location>
    <ligand>
        <name>substrate</name>
    </ligand>
</feature>
<feature type="site" description="Transition state stabilizer" evidence="1">
    <location>
        <position position="75"/>
    </location>
</feature>
<feature type="site" description="Increases basicity of active site His" evidence="1">
    <location>
        <position position="89"/>
    </location>
</feature>
<keyword id="KW-0456">Lyase</keyword>
<keyword id="KW-0460">Magnesium</keyword>
<keyword id="KW-0479">Metal-binding</keyword>
<keyword id="KW-1185">Reference proteome</keyword>
<sequence>MNNDVFPNKFKAALAAKQVQIGCWSALSNPISTEVLGLAGFDWLVLDGEHAPNDISTFIPQLMALKGSASAPVVRVPTNEPVIIKRLLDIGFYNFLIPFVETKEEAEQAVASTRYPPEGIRGVSVSHRANMFGTVADYFAQSNKNITILVQIESQQGVDNVDAIAATEGVDGIFVGPSDLAAALGHLGNASHPDVQKAIQHIFNRASAHGKPSGILAPVEADARRYLEWGATFVAVGSDLGVFRSATQKLADTFKK</sequence>
<gene>
    <name evidence="1" type="primary">garL</name>
    <name type="ordered locus">EcE24377A_3604</name>
</gene>
<name>GARL_ECO24</name>